<protein>
    <recommendedName>
        <fullName>Protein farnesyltransferase/geranylgeranyltransferase type-1 subunit alpha</fullName>
        <ecNumber>2.5.1.58</ecNumber>
        <ecNumber>2.5.1.59</ecNumber>
    </recommendedName>
    <alternativeName>
        <fullName>CAAX farnesyltransferase subunit alpha</fullName>
    </alternativeName>
    <alternativeName>
        <fullName>FTase-alpha</fullName>
    </alternativeName>
    <alternativeName>
        <fullName>Ras proteins prenyltransferase subunit alpha</fullName>
    </alternativeName>
    <alternativeName>
        <fullName>Type I protein geranyl-geranyltransferase subunit alpha</fullName>
        <shortName>GGTase-I-alpha</shortName>
    </alternativeName>
</protein>
<evidence type="ECO:0000250" key="1">
    <source>
        <dbReference type="UniProtKB" id="P29703"/>
    </source>
</evidence>
<evidence type="ECO:0000269" key="2">
    <source>
    </source>
</evidence>
<evidence type="ECO:0000305" key="3"/>
<comment type="function">
    <text evidence="2">Essential subunit of both the farnesyltransferase and the geranylgeranyltransferase complex. Contributes to the transfer of a farnesyl or geranylgeranyl moiety from farnesyl or geranylgeranyl diphosphate to a cysteine at the fourth position from the C-terminus of several proteins having the C-terminal sequence Cys-aliphatic-aliphatic-X.</text>
</comment>
<comment type="catalytic activity">
    <reaction evidence="2">
        <text>L-cysteinyl-[protein] + (2E,6E)-farnesyl diphosphate = S-(2E,6E)-farnesyl-L-cysteinyl-[protein] + diphosphate</text>
        <dbReference type="Rhea" id="RHEA:13345"/>
        <dbReference type="Rhea" id="RHEA-COMP:10131"/>
        <dbReference type="Rhea" id="RHEA-COMP:11535"/>
        <dbReference type="ChEBI" id="CHEBI:29950"/>
        <dbReference type="ChEBI" id="CHEBI:33019"/>
        <dbReference type="ChEBI" id="CHEBI:86019"/>
        <dbReference type="ChEBI" id="CHEBI:175763"/>
        <dbReference type="EC" id="2.5.1.58"/>
    </reaction>
</comment>
<comment type="catalytic activity">
    <reaction evidence="2">
        <text>geranylgeranyl diphosphate + L-cysteinyl-[protein] = S-geranylgeranyl-L-cysteinyl-[protein] + diphosphate</text>
        <dbReference type="Rhea" id="RHEA:21240"/>
        <dbReference type="Rhea" id="RHEA-COMP:10131"/>
        <dbReference type="Rhea" id="RHEA-COMP:11537"/>
        <dbReference type="ChEBI" id="CHEBI:29950"/>
        <dbReference type="ChEBI" id="CHEBI:33019"/>
        <dbReference type="ChEBI" id="CHEBI:57533"/>
        <dbReference type="ChEBI" id="CHEBI:86021"/>
        <dbReference type="EC" id="2.5.1.59"/>
    </reaction>
</comment>
<comment type="cofactor">
    <cofactor evidence="1">
        <name>Mg(2+)</name>
        <dbReference type="ChEBI" id="CHEBI:18420"/>
    </cofactor>
</comment>
<comment type="subunit">
    <text evidence="2">Heterodimer of an alpha and a beta subunit.</text>
</comment>
<comment type="similarity">
    <text evidence="3">Belongs to the protein prenyltransferase subunit alpha family.</text>
</comment>
<feature type="chain" id="PRO_0000119750" description="Protein farnesyltransferase/geranylgeranyltransferase type-1 subunit alpha">
    <location>
        <begin position="1"/>
        <end position="346"/>
    </location>
</feature>
<feature type="repeat" description="PFTA 1">
    <location>
        <begin position="59"/>
        <end position="93"/>
    </location>
</feature>
<feature type="repeat" description="PFTA 2">
    <location>
        <begin position="94"/>
        <end position="128"/>
    </location>
</feature>
<feature type="repeat" description="PFTA 3">
    <location>
        <begin position="130"/>
        <end position="164"/>
    </location>
</feature>
<feature type="repeat" description="PFTA 4">
    <location>
        <begin position="165"/>
        <end position="198"/>
    </location>
</feature>
<feature type="repeat" description="PFTA 5">
    <location>
        <begin position="205"/>
        <end position="239"/>
    </location>
</feature>
<reference key="1">
    <citation type="journal article" date="1997" name="Mol. Cell. Biol.">
        <title>Plant farnesyltransferase can restore yeast Ras signaling and mating.</title>
        <authorList>
            <person name="Yalovsky S."/>
            <person name="Trueblood C.E."/>
            <person name="Callan K.L."/>
            <person name="Narita J.O."/>
            <person name="Jenkins S.M."/>
            <person name="Rine J."/>
            <person name="Gruissem W."/>
        </authorList>
    </citation>
    <scope>NUCLEOTIDE SEQUENCE [MRNA]</scope>
    <scope>FUNCTION</scope>
    <scope>CATALYTIC ACTIVITY</scope>
    <scope>SUBUNIT</scope>
    <source>
        <strain>cv. VFNT Cherry LA1221</strain>
    </source>
</reference>
<gene>
    <name type="primary">FTA</name>
</gene>
<name>FNTA_SOLLC</name>
<organism>
    <name type="scientific">Solanum lycopersicum</name>
    <name type="common">Tomato</name>
    <name type="synonym">Lycopersicon esculentum</name>
    <dbReference type="NCBI Taxonomy" id="4081"/>
    <lineage>
        <taxon>Eukaryota</taxon>
        <taxon>Viridiplantae</taxon>
        <taxon>Streptophyta</taxon>
        <taxon>Embryophyta</taxon>
        <taxon>Tracheophyta</taxon>
        <taxon>Spermatophyta</taxon>
        <taxon>Magnoliopsida</taxon>
        <taxon>eudicotyledons</taxon>
        <taxon>Gunneridae</taxon>
        <taxon>Pentapetalae</taxon>
        <taxon>asterids</taxon>
        <taxon>lamiids</taxon>
        <taxon>Solanales</taxon>
        <taxon>Solanaceae</taxon>
        <taxon>Solanoideae</taxon>
        <taxon>Solaneae</taxon>
        <taxon>Solanum</taxon>
        <taxon>Solanum subgen. Lycopersicon</taxon>
    </lineage>
</organism>
<accession>P93227</accession>
<sequence length="346" mass="40103">MDSCEVTKTRIPFKERPDWADVKPVPQDDGPCPVVPIAYTEDFSETMDYFRAIYVADERSTRALQLTGEAIQLNPGNYTVWQFRRVVLEALGVDLREELKFVDRIAGENTKNYQIWHHRRWLAEKLGADAVTNELEFTKKIFSQDAKNYHAWSHRQWVLQALGGWEDELAYCQQLLEDDIYNNSAWNQRYFVVTRSPLLGGLVAMRELEVNYTVQAIRASPENESPWRYLRGLYKNDTQSLVQDSQVASVLWDVLTSQNSHVHALRFLLDLLCHDLEPSQELKSAVDVLTPQSCSPDLALTKKICSILEHADPMRVKYWNWRKSMVRVQLLQSQNAERLANLSVQE</sequence>
<keyword id="KW-0460">Magnesium</keyword>
<keyword id="KW-0637">Prenyltransferase</keyword>
<keyword id="KW-1185">Reference proteome</keyword>
<keyword id="KW-0677">Repeat</keyword>
<keyword id="KW-0808">Transferase</keyword>
<proteinExistence type="evidence at protein level"/>
<dbReference type="EC" id="2.5.1.58"/>
<dbReference type="EC" id="2.5.1.59"/>
<dbReference type="EMBL" id="U83707">
    <property type="protein sequence ID" value="AAC49665.1"/>
    <property type="molecule type" value="mRNA"/>
</dbReference>
<dbReference type="PIR" id="T07665">
    <property type="entry name" value="T07665"/>
</dbReference>
<dbReference type="SMR" id="P93227"/>
<dbReference type="FunCoup" id="P93227">
    <property type="interactions" value="3498"/>
</dbReference>
<dbReference type="STRING" id="4081.P93227"/>
<dbReference type="PaxDb" id="4081-Solyc06g073390.2.1"/>
<dbReference type="eggNOG" id="KOG0530">
    <property type="taxonomic scope" value="Eukaryota"/>
</dbReference>
<dbReference type="InParanoid" id="P93227"/>
<dbReference type="Proteomes" id="UP000004994">
    <property type="component" value="Unplaced"/>
</dbReference>
<dbReference type="ExpressionAtlas" id="P93227">
    <property type="expression patterns" value="baseline"/>
</dbReference>
<dbReference type="GO" id="GO:0005953">
    <property type="term" value="C:CAAX-protein geranylgeranyltransferase complex"/>
    <property type="evidence" value="ECO:0000250"/>
    <property type="project" value="UniProtKB"/>
</dbReference>
<dbReference type="GO" id="GO:0005737">
    <property type="term" value="C:cytoplasm"/>
    <property type="evidence" value="ECO:0000318"/>
    <property type="project" value="GO_Central"/>
</dbReference>
<dbReference type="GO" id="GO:0005965">
    <property type="term" value="C:protein farnesyltransferase complex"/>
    <property type="evidence" value="ECO:0000250"/>
    <property type="project" value="UniProtKB"/>
</dbReference>
<dbReference type="GO" id="GO:0004662">
    <property type="term" value="F:CAAX-protein geranylgeranyltransferase activity"/>
    <property type="evidence" value="ECO:0007669"/>
    <property type="project" value="UniProtKB-EC"/>
</dbReference>
<dbReference type="GO" id="GO:0004660">
    <property type="term" value="F:protein farnesyltransferase activity"/>
    <property type="evidence" value="ECO:0000250"/>
    <property type="project" value="UniProtKB"/>
</dbReference>
<dbReference type="GO" id="GO:0004661">
    <property type="term" value="F:protein geranylgeranyltransferase activity"/>
    <property type="evidence" value="ECO:0000250"/>
    <property type="project" value="UniProtKB"/>
</dbReference>
<dbReference type="GO" id="GO:0007323">
    <property type="term" value="P:peptide pheromone maturation"/>
    <property type="evidence" value="ECO:0000318"/>
    <property type="project" value="GO_Central"/>
</dbReference>
<dbReference type="GO" id="GO:0018343">
    <property type="term" value="P:protein farnesylation"/>
    <property type="evidence" value="ECO:0000250"/>
    <property type="project" value="UniProtKB"/>
</dbReference>
<dbReference type="GO" id="GO:0018344">
    <property type="term" value="P:protein geranylgeranylation"/>
    <property type="evidence" value="ECO:0000250"/>
    <property type="project" value="UniProtKB"/>
</dbReference>
<dbReference type="FunFam" id="1.25.40.120:FF:000004">
    <property type="entry name" value="Protein farnesyltransferase/geranylgeranyltransferase type-1 subunit alpha"/>
    <property type="match status" value="1"/>
</dbReference>
<dbReference type="Gene3D" id="1.25.40.120">
    <property type="entry name" value="Protein prenylyltransferase"/>
    <property type="match status" value="1"/>
</dbReference>
<dbReference type="InterPro" id="IPR002088">
    <property type="entry name" value="Prenyl_trans_a"/>
</dbReference>
<dbReference type="PANTHER" id="PTHR11129">
    <property type="entry name" value="PROTEIN FARNESYLTRANSFERASE ALPHA SUBUNIT/RAB GERANYLGERANYL TRANSFERASE ALPHA SUBUNIT"/>
    <property type="match status" value="1"/>
</dbReference>
<dbReference type="PANTHER" id="PTHR11129:SF1">
    <property type="entry name" value="PROTEIN FARNESYLTRANSFERASE_GERANYLGERANYLTRANSFERASE TYPE-1 SUBUNIT ALPHA"/>
    <property type="match status" value="1"/>
</dbReference>
<dbReference type="Pfam" id="PF01239">
    <property type="entry name" value="PPTA"/>
    <property type="match status" value="4"/>
</dbReference>
<dbReference type="SUPFAM" id="SSF48439">
    <property type="entry name" value="Protein prenylyltransferase"/>
    <property type="match status" value="1"/>
</dbReference>
<dbReference type="PROSITE" id="PS51147">
    <property type="entry name" value="PFTA"/>
    <property type="match status" value="5"/>
</dbReference>